<reference key="1">
    <citation type="journal article" date="2006" name="Mol. Pharmacol.">
        <title>Zinc and mercuric ions distinguish TRESK from the other two-pore-domain K+ channels.</title>
        <authorList>
            <person name="Czirjak G."/>
            <person name="Enyedi P."/>
        </authorList>
    </citation>
    <scope>NUCLEOTIDE SEQUENCE [MRNA]</scope>
    <source>
        <strain>NMRI</strain>
        <tissue>Kidney</tissue>
    </source>
</reference>
<reference key="2">
    <citation type="journal article" date="2005" name="Science">
        <title>The transcriptional landscape of the mammalian genome.</title>
        <authorList>
            <person name="Carninci P."/>
            <person name="Kasukawa T."/>
            <person name="Katayama S."/>
            <person name="Gough J."/>
            <person name="Frith M.C."/>
            <person name="Maeda N."/>
            <person name="Oyama R."/>
            <person name="Ravasi T."/>
            <person name="Lenhard B."/>
            <person name="Wells C."/>
            <person name="Kodzius R."/>
            <person name="Shimokawa K."/>
            <person name="Bajic V.B."/>
            <person name="Brenner S.E."/>
            <person name="Batalov S."/>
            <person name="Forrest A.R."/>
            <person name="Zavolan M."/>
            <person name="Davis M.J."/>
            <person name="Wilming L.G."/>
            <person name="Aidinis V."/>
            <person name="Allen J.E."/>
            <person name="Ambesi-Impiombato A."/>
            <person name="Apweiler R."/>
            <person name="Aturaliya R.N."/>
            <person name="Bailey T.L."/>
            <person name="Bansal M."/>
            <person name="Baxter L."/>
            <person name="Beisel K.W."/>
            <person name="Bersano T."/>
            <person name="Bono H."/>
            <person name="Chalk A.M."/>
            <person name="Chiu K.P."/>
            <person name="Choudhary V."/>
            <person name="Christoffels A."/>
            <person name="Clutterbuck D.R."/>
            <person name="Crowe M.L."/>
            <person name="Dalla E."/>
            <person name="Dalrymple B.P."/>
            <person name="de Bono B."/>
            <person name="Della Gatta G."/>
            <person name="di Bernardo D."/>
            <person name="Down T."/>
            <person name="Engstrom P."/>
            <person name="Fagiolini M."/>
            <person name="Faulkner G."/>
            <person name="Fletcher C.F."/>
            <person name="Fukushima T."/>
            <person name="Furuno M."/>
            <person name="Futaki S."/>
            <person name="Gariboldi M."/>
            <person name="Georgii-Hemming P."/>
            <person name="Gingeras T.R."/>
            <person name="Gojobori T."/>
            <person name="Green R.E."/>
            <person name="Gustincich S."/>
            <person name="Harbers M."/>
            <person name="Hayashi Y."/>
            <person name="Hensch T.K."/>
            <person name="Hirokawa N."/>
            <person name="Hill D."/>
            <person name="Huminiecki L."/>
            <person name="Iacono M."/>
            <person name="Ikeo K."/>
            <person name="Iwama A."/>
            <person name="Ishikawa T."/>
            <person name="Jakt M."/>
            <person name="Kanapin A."/>
            <person name="Katoh M."/>
            <person name="Kawasawa Y."/>
            <person name="Kelso J."/>
            <person name="Kitamura H."/>
            <person name="Kitano H."/>
            <person name="Kollias G."/>
            <person name="Krishnan S.P."/>
            <person name="Kruger A."/>
            <person name="Kummerfeld S.K."/>
            <person name="Kurochkin I.V."/>
            <person name="Lareau L.F."/>
            <person name="Lazarevic D."/>
            <person name="Lipovich L."/>
            <person name="Liu J."/>
            <person name="Liuni S."/>
            <person name="McWilliam S."/>
            <person name="Madan Babu M."/>
            <person name="Madera M."/>
            <person name="Marchionni L."/>
            <person name="Matsuda H."/>
            <person name="Matsuzawa S."/>
            <person name="Miki H."/>
            <person name="Mignone F."/>
            <person name="Miyake S."/>
            <person name="Morris K."/>
            <person name="Mottagui-Tabar S."/>
            <person name="Mulder N."/>
            <person name="Nakano N."/>
            <person name="Nakauchi H."/>
            <person name="Ng P."/>
            <person name="Nilsson R."/>
            <person name="Nishiguchi S."/>
            <person name="Nishikawa S."/>
            <person name="Nori F."/>
            <person name="Ohara O."/>
            <person name="Okazaki Y."/>
            <person name="Orlando V."/>
            <person name="Pang K.C."/>
            <person name="Pavan W.J."/>
            <person name="Pavesi G."/>
            <person name="Pesole G."/>
            <person name="Petrovsky N."/>
            <person name="Piazza S."/>
            <person name="Reed J."/>
            <person name="Reid J.F."/>
            <person name="Ring B.Z."/>
            <person name="Ringwald M."/>
            <person name="Rost B."/>
            <person name="Ruan Y."/>
            <person name="Salzberg S.L."/>
            <person name="Sandelin A."/>
            <person name="Schneider C."/>
            <person name="Schoenbach C."/>
            <person name="Sekiguchi K."/>
            <person name="Semple C.A."/>
            <person name="Seno S."/>
            <person name="Sessa L."/>
            <person name="Sheng Y."/>
            <person name="Shibata Y."/>
            <person name="Shimada H."/>
            <person name="Shimada K."/>
            <person name="Silva D."/>
            <person name="Sinclair B."/>
            <person name="Sperling S."/>
            <person name="Stupka E."/>
            <person name="Sugiura K."/>
            <person name="Sultana R."/>
            <person name="Takenaka Y."/>
            <person name="Taki K."/>
            <person name="Tammoja K."/>
            <person name="Tan S.L."/>
            <person name="Tang S."/>
            <person name="Taylor M.S."/>
            <person name="Tegner J."/>
            <person name="Teichmann S.A."/>
            <person name="Ueda H.R."/>
            <person name="van Nimwegen E."/>
            <person name="Verardo R."/>
            <person name="Wei C.L."/>
            <person name="Yagi K."/>
            <person name="Yamanishi H."/>
            <person name="Zabarovsky E."/>
            <person name="Zhu S."/>
            <person name="Zimmer A."/>
            <person name="Hide W."/>
            <person name="Bult C."/>
            <person name="Grimmond S.M."/>
            <person name="Teasdale R.D."/>
            <person name="Liu E.T."/>
            <person name="Brusic V."/>
            <person name="Quackenbush J."/>
            <person name="Wahlestedt C."/>
            <person name="Mattick J.S."/>
            <person name="Hume D.A."/>
            <person name="Kai C."/>
            <person name="Sasaki D."/>
            <person name="Tomaru Y."/>
            <person name="Fukuda S."/>
            <person name="Kanamori-Katayama M."/>
            <person name="Suzuki M."/>
            <person name="Aoki J."/>
            <person name="Arakawa T."/>
            <person name="Iida J."/>
            <person name="Imamura K."/>
            <person name="Itoh M."/>
            <person name="Kato T."/>
            <person name="Kawaji H."/>
            <person name="Kawagashira N."/>
            <person name="Kawashima T."/>
            <person name="Kojima M."/>
            <person name="Kondo S."/>
            <person name="Konno H."/>
            <person name="Nakano K."/>
            <person name="Ninomiya N."/>
            <person name="Nishio T."/>
            <person name="Okada M."/>
            <person name="Plessy C."/>
            <person name="Shibata K."/>
            <person name="Shiraki T."/>
            <person name="Suzuki S."/>
            <person name="Tagami M."/>
            <person name="Waki K."/>
            <person name="Watahiki A."/>
            <person name="Okamura-Oho Y."/>
            <person name="Suzuki H."/>
            <person name="Kawai J."/>
            <person name="Hayashizaki Y."/>
        </authorList>
    </citation>
    <scope>NUCLEOTIDE SEQUENCE [LARGE SCALE MRNA]</scope>
</reference>
<reference key="3">
    <citation type="journal article" date="2009" name="Immunity">
        <title>The phagosomal proteome in interferon-gamma-activated macrophages.</title>
        <authorList>
            <person name="Trost M."/>
            <person name="English L."/>
            <person name="Lemieux S."/>
            <person name="Courcelles M."/>
            <person name="Desjardins M."/>
            <person name="Thibault P."/>
        </authorList>
    </citation>
    <scope>IDENTIFICATION BY MASS SPECTROMETRY [LARGE SCALE ANALYSIS]</scope>
</reference>
<reference key="4">
    <citation type="journal article" date="2017" name="Sci. Rep.">
        <title>Recombinant tandem of pore-domains in a Weakly Inward rectifying K+ channel 2 (TWIK2) forms active lysosomal channels.</title>
        <authorList>
            <person name="Bobak N."/>
            <person name="Feliciangeli S."/>
            <person name="Chen C.C."/>
            <person name="Ben Soussia I."/>
            <person name="Bittner S."/>
            <person name="Pagnotta S."/>
            <person name="Ruck T."/>
            <person name="Biel M."/>
            <person name="Wahl-Schott C."/>
            <person name="Grimm C."/>
            <person name="Meuth S.G."/>
            <person name="Lesage F."/>
        </authorList>
    </citation>
    <scope>FUNCTION</scope>
    <scope>TRANSPORTER ACTIVITY</scope>
    <scope>SUBCELLULAR LOCATION</scope>
</reference>
<reference key="5">
    <citation type="journal article" date="2018" name="Immunity">
        <title>The TWIK2 Potassium Efflux Channel in Macrophages Mediates NLRP3 Inflammasome-Induced Inflammation.</title>
        <authorList>
            <person name="Di A."/>
            <person name="Xiong S."/>
            <person name="Ye Z."/>
            <person name="Malireddi R.K.S."/>
            <person name="Kometani S."/>
            <person name="Zhong M."/>
            <person name="Mittal M."/>
            <person name="Hong Z."/>
            <person name="Kanneganti T.D."/>
            <person name="Rehman J."/>
            <person name="Malik A.B."/>
        </authorList>
    </citation>
    <scope>FUNCTION</scope>
</reference>
<sequence>MRRGALLASALAAYAGYLALGALLVARLERPHEARLRAELGTLREQLLQHSPCVAAHALDAFVERVLAAGRLGRAALANASGAANASDPAWDFASALFFASTLVTTVGYGYTTPLTDAGKAFSIVFALLGVPITMLLLTASAQRLSLLLTHAPLSWLSLHWGWPPQRAARWHLVALLMVIVAIFFLVPAAVFAYLEEAWSFLDAFYFCFISLSTIGLGDYVPGEAPGQPYRALYKVLVTAYLFLGLVAMVLVLQTFRRVSDLHGLTELILLPDPDPASLSQDEDDQVAVLDARTDLHQHLSAASHADYASIPR</sequence>
<feature type="chain" id="PRO_0000461403" description="Potassium channel subfamily K member 6">
    <location>
        <begin position="1"/>
        <end position="313"/>
    </location>
</feature>
<feature type="topological domain" description="Cytoplasmic" evidence="4">
    <location>
        <begin position="1"/>
        <end position="4"/>
    </location>
</feature>
<feature type="transmembrane region" description="Helical" evidence="4">
    <location>
        <begin position="5"/>
        <end position="25"/>
    </location>
</feature>
<feature type="intramembrane region" description="Pore-forming; Name=Pore-forming 1" evidence="4">
    <location>
        <begin position="90"/>
        <end position="115"/>
    </location>
</feature>
<feature type="transmembrane region" description="Helical" evidence="4">
    <location>
        <begin position="121"/>
        <end position="141"/>
    </location>
</feature>
<feature type="topological domain" description="Cytoplasmic" evidence="4">
    <location>
        <begin position="142"/>
        <end position="172"/>
    </location>
</feature>
<feature type="transmembrane region" description="Helical" evidence="4">
    <location>
        <begin position="173"/>
        <end position="193"/>
    </location>
</feature>
<feature type="intramembrane region" description="Pore-forming; Name=Pore-forming 2" evidence="4">
    <location>
        <begin position="199"/>
        <end position="223"/>
    </location>
</feature>
<feature type="transmembrane region" description="Helical" evidence="4">
    <location>
        <begin position="236"/>
        <end position="256"/>
    </location>
</feature>
<feature type="topological domain" description="Cytoplasmic" evidence="4">
    <location>
        <begin position="257"/>
        <end position="313"/>
    </location>
</feature>
<feature type="region of interest" description="Selectivity filter 1" evidence="3">
    <location>
        <begin position="106"/>
        <end position="111"/>
    </location>
</feature>
<feature type="region of interest" description="Selectivity filter 2" evidence="3">
    <location>
        <begin position="214"/>
        <end position="219"/>
    </location>
</feature>
<feature type="short sequence motif" description="Lysosomal targeting signal" evidence="1">
    <location>
        <begin position="282"/>
        <end position="290"/>
    </location>
</feature>
<feature type="short sequence motif" description="Lysosomal targeting signal" evidence="1">
    <location>
        <begin position="308"/>
        <end position="312"/>
    </location>
</feature>
<feature type="binding site" evidence="3">
    <location>
        <position position="106"/>
    </location>
    <ligand>
        <name>K(+)</name>
        <dbReference type="ChEBI" id="CHEBI:29103"/>
        <label>1</label>
    </ligand>
</feature>
<feature type="binding site" evidence="3">
    <location>
        <position position="106"/>
    </location>
    <ligand>
        <name>K(+)</name>
        <dbReference type="ChEBI" id="CHEBI:29103"/>
        <label>4</label>
    </ligand>
</feature>
<feature type="binding site" evidence="3">
    <location>
        <position position="107"/>
    </location>
    <ligand>
        <name>K(+)</name>
        <dbReference type="ChEBI" id="CHEBI:29103"/>
        <label>1</label>
    </ligand>
</feature>
<feature type="binding site" evidence="3">
    <location>
        <position position="107"/>
    </location>
    <ligand>
        <name>K(+)</name>
        <dbReference type="ChEBI" id="CHEBI:29103"/>
        <label>2</label>
    </ligand>
</feature>
<feature type="binding site" evidence="3">
    <location>
        <position position="108"/>
    </location>
    <ligand>
        <name>K(+)</name>
        <dbReference type="ChEBI" id="CHEBI:29103"/>
        <label>2</label>
    </ligand>
</feature>
<feature type="binding site" evidence="3">
    <location>
        <position position="108"/>
    </location>
    <ligand>
        <name>K(+)</name>
        <dbReference type="ChEBI" id="CHEBI:29103"/>
        <label>3</label>
    </ligand>
</feature>
<feature type="binding site" evidence="3">
    <location>
        <position position="109"/>
    </location>
    <ligand>
        <name>K(+)</name>
        <dbReference type="ChEBI" id="CHEBI:29103"/>
        <label>3</label>
    </ligand>
</feature>
<feature type="binding site" evidence="3">
    <location>
        <position position="214"/>
    </location>
    <ligand>
        <name>K(+)</name>
        <dbReference type="ChEBI" id="CHEBI:29103"/>
        <label>1</label>
    </ligand>
</feature>
<feature type="binding site" evidence="3">
    <location>
        <position position="214"/>
    </location>
    <ligand>
        <name>K(+)</name>
        <dbReference type="ChEBI" id="CHEBI:29103"/>
        <label>4</label>
    </ligand>
</feature>
<feature type="binding site" evidence="3">
    <location>
        <position position="215"/>
    </location>
    <ligand>
        <name>K(+)</name>
        <dbReference type="ChEBI" id="CHEBI:29103"/>
        <label>1</label>
    </ligand>
</feature>
<feature type="binding site" evidence="3">
    <location>
        <position position="215"/>
    </location>
    <ligand>
        <name>K(+)</name>
        <dbReference type="ChEBI" id="CHEBI:29103"/>
        <label>2</label>
    </ligand>
</feature>
<feature type="binding site" evidence="3">
    <location>
        <position position="216"/>
    </location>
    <ligand>
        <name>K(+)</name>
        <dbReference type="ChEBI" id="CHEBI:29103"/>
        <label>2</label>
    </ligand>
</feature>
<feature type="binding site" evidence="3">
    <location>
        <position position="216"/>
    </location>
    <ligand>
        <name>K(+)</name>
        <dbReference type="ChEBI" id="CHEBI:29103"/>
        <label>3</label>
    </ligand>
</feature>
<feature type="glycosylation site" description="N-linked (GlcNAc...) asparagine" evidence="4">
    <location>
        <position position="79"/>
    </location>
</feature>
<feature type="glycosylation site" description="N-linked (GlcNAc...) asparagine" evidence="4">
    <location>
        <position position="85"/>
    </location>
</feature>
<feature type="disulfide bond" description="Interchain (with C-53)" evidence="1 3">
    <location>
        <position position="53"/>
    </location>
</feature>
<protein>
    <recommendedName>
        <fullName>Potassium channel subfamily K member 6</fullName>
    </recommendedName>
</protein>
<organism>
    <name type="scientific">Mus musculus</name>
    <name type="common">Mouse</name>
    <dbReference type="NCBI Taxonomy" id="10090"/>
    <lineage>
        <taxon>Eukaryota</taxon>
        <taxon>Metazoa</taxon>
        <taxon>Chordata</taxon>
        <taxon>Craniata</taxon>
        <taxon>Vertebrata</taxon>
        <taxon>Euteleostomi</taxon>
        <taxon>Mammalia</taxon>
        <taxon>Eutheria</taxon>
        <taxon>Euarchontoglires</taxon>
        <taxon>Glires</taxon>
        <taxon>Rodentia</taxon>
        <taxon>Myomorpha</taxon>
        <taxon>Muroidea</taxon>
        <taxon>Muridae</taxon>
        <taxon>Murinae</taxon>
        <taxon>Mus</taxon>
        <taxon>Mus</taxon>
    </lineage>
</organism>
<keyword id="KW-1015">Disulfide bond</keyword>
<keyword id="KW-0967">Endosome</keyword>
<keyword id="KW-0325">Glycoprotein</keyword>
<keyword id="KW-0407">Ion channel</keyword>
<keyword id="KW-0406">Ion transport</keyword>
<keyword id="KW-0458">Lysosome</keyword>
<keyword id="KW-0472">Membrane</keyword>
<keyword id="KW-0479">Metal-binding</keyword>
<keyword id="KW-0630">Potassium</keyword>
<keyword id="KW-0631">Potassium channel</keyword>
<keyword id="KW-0633">Potassium transport</keyword>
<keyword id="KW-1185">Reference proteome</keyword>
<keyword id="KW-0812">Transmembrane</keyword>
<keyword id="KW-1133">Transmembrane helix</keyword>
<keyword id="KW-0813">Transport</keyword>
<name>KCNK6_MOUSE</name>
<evidence type="ECO:0000250" key="1">
    <source>
        <dbReference type="UniProtKB" id="G3V8R8"/>
    </source>
</evidence>
<evidence type="ECO:0000250" key="2">
    <source>
        <dbReference type="UniProtKB" id="O00180"/>
    </source>
</evidence>
<evidence type="ECO:0000250" key="3">
    <source>
        <dbReference type="UniProtKB" id="P57789"/>
    </source>
</evidence>
<evidence type="ECO:0000255" key="4"/>
<evidence type="ECO:0000269" key="5">
    <source>
    </source>
</evidence>
<evidence type="ECO:0000269" key="6">
    <source>
    </source>
</evidence>
<evidence type="ECO:0000305" key="7"/>
<evidence type="ECO:0000312" key="8">
    <source>
        <dbReference type="MGI" id="MGI:1891291"/>
    </source>
</evidence>
<gene>
    <name evidence="8" type="primary">Kcnk6</name>
</gene>
<dbReference type="EMBL" id="DQ185135">
    <property type="protein sequence ID" value="ABA28316.1"/>
    <property type="molecule type" value="mRNA"/>
</dbReference>
<dbReference type="EMBL" id="AK171038">
    <property type="protein sequence ID" value="BAE42203.1"/>
    <property type="molecule type" value="mRNA"/>
</dbReference>
<dbReference type="CCDS" id="CCDS21068.1"/>
<dbReference type="RefSeq" id="NP_001028697.2">
    <property type="nucleotide sequence ID" value="NM_001033525.3"/>
</dbReference>
<dbReference type="SMR" id="Q3TBV4"/>
<dbReference type="FunCoup" id="Q3TBV4">
    <property type="interactions" value="14"/>
</dbReference>
<dbReference type="STRING" id="10090.ENSMUSP00000082975"/>
<dbReference type="GlyGen" id="Q3TBV4">
    <property type="glycosylation" value="1 site"/>
</dbReference>
<dbReference type="PhosphoSitePlus" id="Q3TBV4"/>
<dbReference type="PaxDb" id="10090-ENSMUSP00000082975"/>
<dbReference type="ProteomicsDB" id="330853"/>
<dbReference type="ABCD" id="Q3TBV4">
    <property type="antibodies" value="1 sequenced antibody"/>
</dbReference>
<dbReference type="Antibodypedia" id="30028">
    <property type="antibodies" value="108 antibodies from 25 providers"/>
</dbReference>
<dbReference type="DNASU" id="52150"/>
<dbReference type="Ensembl" id="ENSMUST00000085818.6">
    <property type="protein sequence ID" value="ENSMUSP00000082975.5"/>
    <property type="gene ID" value="ENSMUSG00000046410.11"/>
</dbReference>
<dbReference type="GeneID" id="52150"/>
<dbReference type="KEGG" id="mmu:52150"/>
<dbReference type="UCSC" id="uc009gbg.2">
    <property type="organism name" value="mouse"/>
</dbReference>
<dbReference type="AGR" id="MGI:1891291"/>
<dbReference type="CTD" id="9424"/>
<dbReference type="MGI" id="MGI:1891291">
    <property type="gene designation" value="Kcnk6"/>
</dbReference>
<dbReference type="VEuPathDB" id="HostDB:ENSMUSG00000046410"/>
<dbReference type="eggNOG" id="KOG1418">
    <property type="taxonomic scope" value="Eukaryota"/>
</dbReference>
<dbReference type="GeneTree" id="ENSGT00940000160509"/>
<dbReference type="HOGENOM" id="CLU_022504_6_0_1"/>
<dbReference type="OMA" id="IERPMED"/>
<dbReference type="OrthoDB" id="297496at2759"/>
<dbReference type="TreeFam" id="TF313947"/>
<dbReference type="Reactome" id="R-MMU-1299308">
    <property type="pathway name" value="Tandem of pore domain in a weak inwardly rectifying K+ channels (TWIK)"/>
</dbReference>
<dbReference type="Reactome" id="R-MMU-5576886">
    <property type="pathway name" value="Phase 4 - resting membrane potential"/>
</dbReference>
<dbReference type="BioGRID-ORCS" id="52150">
    <property type="hits" value="1 hit in 78 CRISPR screens"/>
</dbReference>
<dbReference type="ChiTaRS" id="Kcnk6">
    <property type="organism name" value="mouse"/>
</dbReference>
<dbReference type="Proteomes" id="UP000000589">
    <property type="component" value="Chromosome 7"/>
</dbReference>
<dbReference type="Bgee" id="ENSMUSG00000046410">
    <property type="expression patterns" value="Expressed in humerus cartilage element and 171 other cell types or tissues"/>
</dbReference>
<dbReference type="GO" id="GO:0031902">
    <property type="term" value="C:late endosome membrane"/>
    <property type="evidence" value="ECO:0000250"/>
    <property type="project" value="UniProtKB"/>
</dbReference>
<dbReference type="GO" id="GO:0005765">
    <property type="term" value="C:lysosomal membrane"/>
    <property type="evidence" value="ECO:0000314"/>
    <property type="project" value="UniProtKB"/>
</dbReference>
<dbReference type="GO" id="GO:0046872">
    <property type="term" value="F:metal ion binding"/>
    <property type="evidence" value="ECO:0007669"/>
    <property type="project" value="UniProtKB-KW"/>
</dbReference>
<dbReference type="GO" id="GO:0005267">
    <property type="term" value="F:potassium channel activity"/>
    <property type="evidence" value="ECO:0000250"/>
    <property type="project" value="UniProtKB"/>
</dbReference>
<dbReference type="GO" id="GO:0003085">
    <property type="term" value="P:negative regulation of systemic arterial blood pressure"/>
    <property type="evidence" value="ECO:0000315"/>
    <property type="project" value="MGI"/>
</dbReference>
<dbReference type="GO" id="GO:1900227">
    <property type="term" value="P:positive regulation of NLRP3 inflammasome complex assembly"/>
    <property type="evidence" value="ECO:0000315"/>
    <property type="project" value="UniProtKB"/>
</dbReference>
<dbReference type="GO" id="GO:0062196">
    <property type="term" value="P:regulation of lysosome size"/>
    <property type="evidence" value="ECO:0000250"/>
    <property type="project" value="UniProtKB"/>
</dbReference>
<dbReference type="GO" id="GO:0060075">
    <property type="term" value="P:regulation of resting membrane potential"/>
    <property type="evidence" value="ECO:0000315"/>
    <property type="project" value="MGI"/>
</dbReference>
<dbReference type="GO" id="GO:0003073">
    <property type="term" value="P:regulation of systemic arterial blood pressure"/>
    <property type="evidence" value="ECO:0000315"/>
    <property type="project" value="MGI"/>
</dbReference>
<dbReference type="FunFam" id="1.10.287.70:FF:000119">
    <property type="entry name" value="Potassium channel subfamily K member"/>
    <property type="match status" value="1"/>
</dbReference>
<dbReference type="Gene3D" id="1.10.287.70">
    <property type="match status" value="1"/>
</dbReference>
<dbReference type="InterPro" id="IPR003280">
    <property type="entry name" value="2pore_dom_K_chnl"/>
</dbReference>
<dbReference type="InterPro" id="IPR003092">
    <property type="entry name" value="2pore_dom_K_chnl_TASK"/>
</dbReference>
<dbReference type="InterPro" id="IPR005408">
    <property type="entry name" value="2pore_dom_K_chnl_TWIK"/>
</dbReference>
<dbReference type="InterPro" id="IPR005409">
    <property type="entry name" value="2pore_dom_K_chnl_TWIK2"/>
</dbReference>
<dbReference type="InterPro" id="IPR013099">
    <property type="entry name" value="K_chnl_dom"/>
</dbReference>
<dbReference type="PANTHER" id="PTHR11003:SF28">
    <property type="entry name" value="POTASSIUM CHANNEL SUBFAMILY K MEMBER 6"/>
    <property type="match status" value="1"/>
</dbReference>
<dbReference type="PANTHER" id="PTHR11003">
    <property type="entry name" value="POTASSIUM CHANNEL, SUBFAMILY K"/>
    <property type="match status" value="1"/>
</dbReference>
<dbReference type="Pfam" id="PF07885">
    <property type="entry name" value="Ion_trans_2"/>
    <property type="match status" value="2"/>
</dbReference>
<dbReference type="PIRSF" id="PIRSF038061">
    <property type="entry name" value="K_channel_subfamily_K_type"/>
    <property type="match status" value="1"/>
</dbReference>
<dbReference type="PRINTS" id="PR01333">
    <property type="entry name" value="2POREKCHANEL"/>
</dbReference>
<dbReference type="PRINTS" id="PR01587">
    <property type="entry name" value="TWIK2CHANNEL"/>
</dbReference>
<dbReference type="PRINTS" id="PR01586">
    <property type="entry name" value="TWIKCHANNEL"/>
</dbReference>
<dbReference type="SUPFAM" id="SSF81324">
    <property type="entry name" value="Voltage-gated potassium channels"/>
    <property type="match status" value="2"/>
</dbReference>
<accession>Q3TBV4</accession>
<comment type="function">
    <text evidence="5 6">K(+) channel that conducts outward rectifying currents at the membranes of the endolysosomal system (PubMed:28381826, PubMed:29958799). Active in lysosomes where it regulates lysosome numbers and size (PubMed:28381826). In macrophages, enables K(+) efflux coupled to ATP-induced NLRP3 inflammasome activation upon bacterial infection. Cooperates with ATP-gated P2RX7 to activate NLRP3 inflammasome, with P2RX7 conducting Ca(2+) and Na(+) influx that sets the membrane potential for K(+) efflux (PubMed:29958799).</text>
</comment>
<comment type="catalytic activity">
    <reaction evidence="5">
        <text>K(+)(in) = K(+)(out)</text>
        <dbReference type="Rhea" id="RHEA:29463"/>
        <dbReference type="ChEBI" id="CHEBI:29103"/>
    </reaction>
</comment>
<comment type="subunit">
    <text evidence="2">Homodimer; disulfide-linked.</text>
</comment>
<comment type="subcellular location">
    <subcellularLocation>
        <location evidence="5">Late endosome membrane</location>
        <topology evidence="4">Multi-pass membrane protein</topology>
    </subcellularLocation>
    <subcellularLocation>
        <location evidence="5">Lysosome membrane</location>
        <topology evidence="4">Multi-pass membrane protein</topology>
    </subcellularLocation>
</comment>
<comment type="domain">
    <text evidence="3">Each subunit contributes two pore-forming domains 1 and 2 which assemble to form a single pore with M2 and M4 transmembrane helices lining the central cavity and M1 and M3 facing the lipid bilayer. The transmembrane helices are bridged by the selectivity filters 1 and 2 that coordinate the permeant ions. Up to four ions can simultaneously occupy the selectivity filter and at least two elementary charges must translocate across the filter to convert it into the open conformation.</text>
</comment>
<comment type="PTM">
    <text evidence="1">N-glycosylation is necessary for targeting to lysosomes.</text>
</comment>
<comment type="similarity">
    <text evidence="7">Belongs to the two pore domain potassium channel (TC 1.A.1.8) family.</text>
</comment>
<proteinExistence type="evidence at protein level"/>